<gene>
    <name evidence="1" type="primary">mdh</name>
    <name type="ordered locus">Spro_0469</name>
</gene>
<dbReference type="EC" id="1.1.1.37" evidence="1"/>
<dbReference type="EMBL" id="CP000826">
    <property type="protein sequence ID" value="ABV39577.1"/>
    <property type="molecule type" value="Genomic_DNA"/>
</dbReference>
<dbReference type="SMR" id="A8G8Y7"/>
<dbReference type="STRING" id="399741.Spro_0469"/>
<dbReference type="KEGG" id="spe:Spro_0469"/>
<dbReference type="eggNOG" id="COG0039">
    <property type="taxonomic scope" value="Bacteria"/>
</dbReference>
<dbReference type="HOGENOM" id="CLU_047181_1_0_6"/>
<dbReference type="OrthoDB" id="9802969at2"/>
<dbReference type="GO" id="GO:0005737">
    <property type="term" value="C:cytoplasm"/>
    <property type="evidence" value="ECO:0007669"/>
    <property type="project" value="TreeGrafter"/>
</dbReference>
<dbReference type="GO" id="GO:0030060">
    <property type="term" value="F:L-malate dehydrogenase (NAD+) activity"/>
    <property type="evidence" value="ECO:0007669"/>
    <property type="project" value="UniProtKB-UniRule"/>
</dbReference>
<dbReference type="GO" id="GO:0019752">
    <property type="term" value="P:carboxylic acid metabolic process"/>
    <property type="evidence" value="ECO:0007669"/>
    <property type="project" value="InterPro"/>
</dbReference>
<dbReference type="GO" id="GO:0006099">
    <property type="term" value="P:tricarboxylic acid cycle"/>
    <property type="evidence" value="ECO:0007669"/>
    <property type="project" value="UniProtKB-UniRule"/>
</dbReference>
<dbReference type="CDD" id="cd01337">
    <property type="entry name" value="MDH_glyoxysomal_mitochondrial"/>
    <property type="match status" value="1"/>
</dbReference>
<dbReference type="FunFam" id="3.40.50.720:FF:000017">
    <property type="entry name" value="Malate dehydrogenase"/>
    <property type="match status" value="1"/>
</dbReference>
<dbReference type="FunFam" id="3.90.110.10:FF:000001">
    <property type="entry name" value="Malate dehydrogenase"/>
    <property type="match status" value="1"/>
</dbReference>
<dbReference type="Gene3D" id="3.90.110.10">
    <property type="entry name" value="Lactate dehydrogenase/glycoside hydrolase, family 4, C-terminal"/>
    <property type="match status" value="1"/>
</dbReference>
<dbReference type="Gene3D" id="3.40.50.720">
    <property type="entry name" value="NAD(P)-binding Rossmann-like Domain"/>
    <property type="match status" value="1"/>
</dbReference>
<dbReference type="HAMAP" id="MF_01516">
    <property type="entry name" value="Malate_dehydrog_1"/>
    <property type="match status" value="1"/>
</dbReference>
<dbReference type="InterPro" id="IPR001557">
    <property type="entry name" value="L-lactate/malate_DH"/>
</dbReference>
<dbReference type="InterPro" id="IPR022383">
    <property type="entry name" value="Lactate/malate_DH_C"/>
</dbReference>
<dbReference type="InterPro" id="IPR001236">
    <property type="entry name" value="Lactate/malate_DH_N"/>
</dbReference>
<dbReference type="InterPro" id="IPR015955">
    <property type="entry name" value="Lactate_DH/Glyco_Ohase_4_C"/>
</dbReference>
<dbReference type="InterPro" id="IPR010097">
    <property type="entry name" value="Malate_DH_type1"/>
</dbReference>
<dbReference type="InterPro" id="IPR023958">
    <property type="entry name" value="Malate_DH_type1_bac"/>
</dbReference>
<dbReference type="InterPro" id="IPR036291">
    <property type="entry name" value="NAD(P)-bd_dom_sf"/>
</dbReference>
<dbReference type="NCBIfam" id="TIGR01772">
    <property type="entry name" value="MDH_euk_gproteo"/>
    <property type="match status" value="1"/>
</dbReference>
<dbReference type="PANTHER" id="PTHR11540">
    <property type="entry name" value="MALATE AND LACTATE DEHYDROGENASE"/>
    <property type="match status" value="1"/>
</dbReference>
<dbReference type="PANTHER" id="PTHR11540:SF16">
    <property type="entry name" value="MALATE DEHYDROGENASE, MITOCHONDRIAL"/>
    <property type="match status" value="1"/>
</dbReference>
<dbReference type="Pfam" id="PF02866">
    <property type="entry name" value="Ldh_1_C"/>
    <property type="match status" value="1"/>
</dbReference>
<dbReference type="Pfam" id="PF00056">
    <property type="entry name" value="Ldh_1_N"/>
    <property type="match status" value="1"/>
</dbReference>
<dbReference type="PIRSF" id="PIRSF000102">
    <property type="entry name" value="Lac_mal_DH"/>
    <property type="match status" value="1"/>
</dbReference>
<dbReference type="SUPFAM" id="SSF56327">
    <property type="entry name" value="LDH C-terminal domain-like"/>
    <property type="match status" value="1"/>
</dbReference>
<dbReference type="SUPFAM" id="SSF51735">
    <property type="entry name" value="NAD(P)-binding Rossmann-fold domains"/>
    <property type="match status" value="1"/>
</dbReference>
<sequence>MKVAVLGAAGGIGQALALLLKTQLPSGSELSLYDIAPVTPGVAVDLSHIPTAVKIKGFSGEDATPALHGADVVLISAGVARKPGMDRSDLFNVNAGIVRNLIQQVATTCPKACIGIITNPVNTTVAIAAEVLKKAGVYDKNKLFGVTSLDIIRSNTFVAELKGKQPEELNVPVIGGHSGVTILPLLSQIPGVSFTDQEVADLTKRIQNAGTEVVEAKAGGGSATLSMGQAAARFGLSLVRALQGEKGVVECAYVEGDGKYARFFAQPLVLGKNGVEERKDIGTLSAFEQKALDDMLDVLHKDIELGEKFINN</sequence>
<reference key="1">
    <citation type="submission" date="2007-09" db="EMBL/GenBank/DDBJ databases">
        <title>Complete sequence of chromosome of Serratia proteamaculans 568.</title>
        <authorList>
            <consortium name="US DOE Joint Genome Institute"/>
            <person name="Copeland A."/>
            <person name="Lucas S."/>
            <person name="Lapidus A."/>
            <person name="Barry K."/>
            <person name="Glavina del Rio T."/>
            <person name="Dalin E."/>
            <person name="Tice H."/>
            <person name="Pitluck S."/>
            <person name="Chain P."/>
            <person name="Malfatti S."/>
            <person name="Shin M."/>
            <person name="Vergez L."/>
            <person name="Schmutz J."/>
            <person name="Larimer F."/>
            <person name="Land M."/>
            <person name="Hauser L."/>
            <person name="Kyrpides N."/>
            <person name="Kim E."/>
            <person name="Taghavi S."/>
            <person name="Newman L."/>
            <person name="Vangronsveld J."/>
            <person name="van der Lelie D."/>
            <person name="Richardson P."/>
        </authorList>
    </citation>
    <scope>NUCLEOTIDE SEQUENCE [LARGE SCALE GENOMIC DNA]</scope>
    <source>
        <strain>568</strain>
    </source>
</reference>
<name>MDH_SERP5</name>
<proteinExistence type="inferred from homology"/>
<accession>A8G8Y7</accession>
<organism>
    <name type="scientific">Serratia proteamaculans (strain 568)</name>
    <dbReference type="NCBI Taxonomy" id="399741"/>
    <lineage>
        <taxon>Bacteria</taxon>
        <taxon>Pseudomonadati</taxon>
        <taxon>Pseudomonadota</taxon>
        <taxon>Gammaproteobacteria</taxon>
        <taxon>Enterobacterales</taxon>
        <taxon>Yersiniaceae</taxon>
        <taxon>Serratia</taxon>
    </lineage>
</organism>
<comment type="function">
    <text evidence="1">Catalyzes the reversible oxidation of malate to oxaloacetate.</text>
</comment>
<comment type="catalytic activity">
    <reaction evidence="1">
        <text>(S)-malate + NAD(+) = oxaloacetate + NADH + H(+)</text>
        <dbReference type="Rhea" id="RHEA:21432"/>
        <dbReference type="ChEBI" id="CHEBI:15378"/>
        <dbReference type="ChEBI" id="CHEBI:15589"/>
        <dbReference type="ChEBI" id="CHEBI:16452"/>
        <dbReference type="ChEBI" id="CHEBI:57540"/>
        <dbReference type="ChEBI" id="CHEBI:57945"/>
        <dbReference type="EC" id="1.1.1.37"/>
    </reaction>
</comment>
<comment type="subunit">
    <text evidence="1">Homodimer.</text>
</comment>
<comment type="similarity">
    <text evidence="1">Belongs to the LDH/MDH superfamily. MDH type 1 family.</text>
</comment>
<feature type="chain" id="PRO_1000068591" description="Malate dehydrogenase">
    <location>
        <begin position="1"/>
        <end position="312"/>
    </location>
</feature>
<feature type="active site" description="Proton acceptor" evidence="1">
    <location>
        <position position="177"/>
    </location>
</feature>
<feature type="binding site" evidence="1">
    <location>
        <begin position="7"/>
        <end position="13"/>
    </location>
    <ligand>
        <name>NAD(+)</name>
        <dbReference type="ChEBI" id="CHEBI:57540"/>
    </ligand>
</feature>
<feature type="binding site" evidence="1">
    <location>
        <position position="34"/>
    </location>
    <ligand>
        <name>NAD(+)</name>
        <dbReference type="ChEBI" id="CHEBI:57540"/>
    </ligand>
</feature>
<feature type="binding site" evidence="1">
    <location>
        <position position="81"/>
    </location>
    <ligand>
        <name>substrate</name>
    </ligand>
</feature>
<feature type="binding site" evidence="1">
    <location>
        <position position="87"/>
    </location>
    <ligand>
        <name>substrate</name>
    </ligand>
</feature>
<feature type="binding site" evidence="1">
    <location>
        <position position="94"/>
    </location>
    <ligand>
        <name>NAD(+)</name>
        <dbReference type="ChEBI" id="CHEBI:57540"/>
    </ligand>
</feature>
<feature type="binding site" evidence="1">
    <location>
        <begin position="117"/>
        <end position="119"/>
    </location>
    <ligand>
        <name>NAD(+)</name>
        <dbReference type="ChEBI" id="CHEBI:57540"/>
    </ligand>
</feature>
<feature type="binding site" evidence="1">
    <location>
        <position position="119"/>
    </location>
    <ligand>
        <name>substrate</name>
    </ligand>
</feature>
<feature type="binding site" evidence="1">
    <location>
        <position position="153"/>
    </location>
    <ligand>
        <name>substrate</name>
    </ligand>
</feature>
<feature type="binding site" evidence="1">
    <location>
        <position position="227"/>
    </location>
    <ligand>
        <name>NAD(+)</name>
        <dbReference type="ChEBI" id="CHEBI:57540"/>
    </ligand>
</feature>
<keyword id="KW-0520">NAD</keyword>
<keyword id="KW-0560">Oxidoreductase</keyword>
<keyword id="KW-0816">Tricarboxylic acid cycle</keyword>
<protein>
    <recommendedName>
        <fullName evidence="1">Malate dehydrogenase</fullName>
        <ecNumber evidence="1">1.1.1.37</ecNumber>
    </recommendedName>
</protein>
<evidence type="ECO:0000255" key="1">
    <source>
        <dbReference type="HAMAP-Rule" id="MF_01516"/>
    </source>
</evidence>